<keyword id="KW-0028">Amino-acid biosynthesis</keyword>
<keyword id="KW-0368">Histidine biosynthesis</keyword>
<keyword id="KW-0378">Hydrolase</keyword>
<keyword id="KW-0486">Methionine biosynthesis</keyword>
<keyword id="KW-0511">Multifunctional enzyme</keyword>
<keyword id="KW-0521">NADP</keyword>
<keyword id="KW-0554">One-carbon metabolism</keyword>
<keyword id="KW-0560">Oxidoreductase</keyword>
<keyword id="KW-0658">Purine biosynthesis</keyword>
<keyword id="KW-1185">Reference proteome</keyword>
<evidence type="ECO:0000255" key="1">
    <source>
        <dbReference type="HAMAP-Rule" id="MF_01576"/>
    </source>
</evidence>
<reference key="1">
    <citation type="journal article" date="2004" name="Genome Res.">
        <title>Genome sequence of Haloarcula marismortui: a halophilic archaeon from the Dead Sea.</title>
        <authorList>
            <person name="Baliga N.S."/>
            <person name="Bonneau R."/>
            <person name="Facciotti M.T."/>
            <person name="Pan M."/>
            <person name="Glusman G."/>
            <person name="Deutsch E.W."/>
            <person name="Shannon P."/>
            <person name="Chiu Y."/>
            <person name="Weng R.S."/>
            <person name="Gan R.R."/>
            <person name="Hung P."/>
            <person name="Date S.V."/>
            <person name="Marcotte E."/>
            <person name="Hood L."/>
            <person name="Ng W.V."/>
        </authorList>
    </citation>
    <scope>NUCLEOTIDE SEQUENCE [LARGE SCALE GENOMIC DNA]</scope>
    <source>
        <strain>ATCC 43049 / DSM 3752 / JCM 8966 / VKM B-1809</strain>
    </source>
</reference>
<feature type="chain" id="PRO_0000268578" description="Bifunctional protein FolD 1">
    <location>
        <begin position="1"/>
        <end position="297"/>
    </location>
</feature>
<feature type="binding site" evidence="1">
    <location>
        <begin position="164"/>
        <end position="166"/>
    </location>
    <ligand>
        <name>NADP(+)</name>
        <dbReference type="ChEBI" id="CHEBI:58349"/>
    </ligand>
</feature>
<feature type="binding site" evidence="1">
    <location>
        <position position="193"/>
    </location>
    <ligand>
        <name>NADP(+)</name>
        <dbReference type="ChEBI" id="CHEBI:58349"/>
    </ligand>
</feature>
<feature type="binding site" evidence="1">
    <location>
        <position position="234"/>
    </location>
    <ligand>
        <name>NADP(+)</name>
        <dbReference type="ChEBI" id="CHEBI:58349"/>
    </ligand>
</feature>
<gene>
    <name evidence="1" type="primary">folD1</name>
    <name type="ordered locus">rrnAC0996</name>
</gene>
<protein>
    <recommendedName>
        <fullName evidence="1">Bifunctional protein FolD 1</fullName>
    </recommendedName>
    <domain>
        <recommendedName>
            <fullName evidence="1">Methylenetetrahydrofolate dehydrogenase</fullName>
            <ecNumber evidence="1">1.5.1.5</ecNumber>
        </recommendedName>
    </domain>
    <domain>
        <recommendedName>
            <fullName evidence="1">Methenyltetrahydrofolate cyclohydrolase</fullName>
            <ecNumber evidence="1">3.5.4.9</ecNumber>
        </recommendedName>
    </domain>
</protein>
<sequence length="297" mass="31569">MTEIIDGNAVAQSIRDDLVASIDRLADAGHRPSLATVLMSEDPASETYVSMKQDDCEEVGIEAIDIDIDSDADAAELYDTIEDLNADEDVNGILVQMPVPDHVEDRSVLRAIDPMKDVDGFHPENVGRLVAGDARYKPCTPHGIQKLIESAGVDTEGKDAVVVGRSDIVGKPMANLLIQKAPGGNATTTVCHSRTENLAERTRNADILVAAAGVPEMIDGKMIQEGATVIDVGINRVDADTEKGYELVGDVEYESAKEVAGAITPVPGGVGPMTRAMLLYNTVKATGLQHDIDVDLP</sequence>
<comment type="function">
    <text evidence="1">Catalyzes the oxidation of 5,10-methylenetetrahydrofolate to 5,10-methenyltetrahydrofolate and then the hydrolysis of 5,10-methenyltetrahydrofolate to 10-formyltetrahydrofolate.</text>
</comment>
<comment type="catalytic activity">
    <reaction evidence="1">
        <text>(6R)-5,10-methylene-5,6,7,8-tetrahydrofolate + NADP(+) = (6R)-5,10-methenyltetrahydrofolate + NADPH</text>
        <dbReference type="Rhea" id="RHEA:22812"/>
        <dbReference type="ChEBI" id="CHEBI:15636"/>
        <dbReference type="ChEBI" id="CHEBI:57455"/>
        <dbReference type="ChEBI" id="CHEBI:57783"/>
        <dbReference type="ChEBI" id="CHEBI:58349"/>
        <dbReference type="EC" id="1.5.1.5"/>
    </reaction>
</comment>
<comment type="catalytic activity">
    <reaction evidence="1">
        <text>(6R)-5,10-methenyltetrahydrofolate + H2O = (6R)-10-formyltetrahydrofolate + H(+)</text>
        <dbReference type="Rhea" id="RHEA:23700"/>
        <dbReference type="ChEBI" id="CHEBI:15377"/>
        <dbReference type="ChEBI" id="CHEBI:15378"/>
        <dbReference type="ChEBI" id="CHEBI:57455"/>
        <dbReference type="ChEBI" id="CHEBI:195366"/>
        <dbReference type="EC" id="3.5.4.9"/>
    </reaction>
</comment>
<comment type="pathway">
    <text evidence="1">One-carbon metabolism; tetrahydrofolate interconversion.</text>
</comment>
<comment type="subunit">
    <text evidence="1">Homodimer.</text>
</comment>
<comment type="similarity">
    <text evidence="1">Belongs to the tetrahydrofolate dehydrogenase/cyclohydrolase family.</text>
</comment>
<name>FOLD1_HALMA</name>
<dbReference type="EC" id="1.5.1.5" evidence="1"/>
<dbReference type="EC" id="3.5.4.9" evidence="1"/>
<dbReference type="EMBL" id="AY596297">
    <property type="protein sequence ID" value="AAV45963.1"/>
    <property type="molecule type" value="Genomic_DNA"/>
</dbReference>
<dbReference type="RefSeq" id="WP_011223365.1">
    <property type="nucleotide sequence ID" value="NC_006396.1"/>
</dbReference>
<dbReference type="SMR" id="Q5V3D9"/>
<dbReference type="STRING" id="272569.rrnAC0996"/>
<dbReference type="PaxDb" id="272569-rrnAC0996"/>
<dbReference type="EnsemblBacteria" id="AAV45963">
    <property type="protein sequence ID" value="AAV45963"/>
    <property type="gene ID" value="rrnAC0996"/>
</dbReference>
<dbReference type="GeneID" id="40152007"/>
<dbReference type="KEGG" id="hma:rrnAC0996"/>
<dbReference type="PATRIC" id="fig|272569.17.peg.1725"/>
<dbReference type="eggNOG" id="arCOG04538">
    <property type="taxonomic scope" value="Archaea"/>
</dbReference>
<dbReference type="HOGENOM" id="CLU_034045_2_1_2"/>
<dbReference type="UniPathway" id="UPA00193"/>
<dbReference type="Proteomes" id="UP000001169">
    <property type="component" value="Chromosome I"/>
</dbReference>
<dbReference type="GO" id="GO:0005829">
    <property type="term" value="C:cytosol"/>
    <property type="evidence" value="ECO:0007669"/>
    <property type="project" value="TreeGrafter"/>
</dbReference>
<dbReference type="GO" id="GO:0004477">
    <property type="term" value="F:methenyltetrahydrofolate cyclohydrolase activity"/>
    <property type="evidence" value="ECO:0007669"/>
    <property type="project" value="UniProtKB-UniRule"/>
</dbReference>
<dbReference type="GO" id="GO:0004488">
    <property type="term" value="F:methylenetetrahydrofolate dehydrogenase (NADP+) activity"/>
    <property type="evidence" value="ECO:0007669"/>
    <property type="project" value="UniProtKB-UniRule"/>
</dbReference>
<dbReference type="GO" id="GO:0000105">
    <property type="term" value="P:L-histidine biosynthetic process"/>
    <property type="evidence" value="ECO:0007669"/>
    <property type="project" value="UniProtKB-KW"/>
</dbReference>
<dbReference type="GO" id="GO:0009086">
    <property type="term" value="P:methionine biosynthetic process"/>
    <property type="evidence" value="ECO:0007669"/>
    <property type="project" value="UniProtKB-KW"/>
</dbReference>
<dbReference type="GO" id="GO:0006164">
    <property type="term" value="P:purine nucleotide biosynthetic process"/>
    <property type="evidence" value="ECO:0007669"/>
    <property type="project" value="UniProtKB-KW"/>
</dbReference>
<dbReference type="GO" id="GO:0035999">
    <property type="term" value="P:tetrahydrofolate interconversion"/>
    <property type="evidence" value="ECO:0007669"/>
    <property type="project" value="UniProtKB-UniRule"/>
</dbReference>
<dbReference type="CDD" id="cd01080">
    <property type="entry name" value="NAD_bind_m-THF_DH_Cyclohyd"/>
    <property type="match status" value="1"/>
</dbReference>
<dbReference type="FunFam" id="3.40.50.720:FF:000006">
    <property type="entry name" value="Bifunctional protein FolD"/>
    <property type="match status" value="1"/>
</dbReference>
<dbReference type="FunFam" id="3.40.50.10860:FF:000005">
    <property type="entry name" value="C-1-tetrahydrofolate synthase, cytoplasmic, putative"/>
    <property type="match status" value="1"/>
</dbReference>
<dbReference type="Gene3D" id="3.40.50.10860">
    <property type="entry name" value="Leucine Dehydrogenase, chain A, domain 1"/>
    <property type="match status" value="1"/>
</dbReference>
<dbReference type="Gene3D" id="3.40.50.720">
    <property type="entry name" value="NAD(P)-binding Rossmann-like Domain"/>
    <property type="match status" value="1"/>
</dbReference>
<dbReference type="HAMAP" id="MF_01576">
    <property type="entry name" value="THF_DHG_CYH"/>
    <property type="match status" value="1"/>
</dbReference>
<dbReference type="InterPro" id="IPR046346">
    <property type="entry name" value="Aminoacid_DH-like_N_sf"/>
</dbReference>
<dbReference type="InterPro" id="IPR036291">
    <property type="entry name" value="NAD(P)-bd_dom_sf"/>
</dbReference>
<dbReference type="InterPro" id="IPR000672">
    <property type="entry name" value="THF_DH/CycHdrlase"/>
</dbReference>
<dbReference type="InterPro" id="IPR020630">
    <property type="entry name" value="THF_DH/CycHdrlase_cat_dom"/>
</dbReference>
<dbReference type="InterPro" id="IPR020631">
    <property type="entry name" value="THF_DH/CycHdrlase_NAD-bd_dom"/>
</dbReference>
<dbReference type="NCBIfam" id="NF010764">
    <property type="entry name" value="PRK14167.1"/>
    <property type="match status" value="1"/>
</dbReference>
<dbReference type="PANTHER" id="PTHR48099:SF5">
    <property type="entry name" value="C-1-TETRAHYDROFOLATE SYNTHASE, CYTOPLASMIC"/>
    <property type="match status" value="1"/>
</dbReference>
<dbReference type="PANTHER" id="PTHR48099">
    <property type="entry name" value="C-1-TETRAHYDROFOLATE SYNTHASE, CYTOPLASMIC-RELATED"/>
    <property type="match status" value="1"/>
</dbReference>
<dbReference type="Pfam" id="PF00763">
    <property type="entry name" value="THF_DHG_CYH"/>
    <property type="match status" value="1"/>
</dbReference>
<dbReference type="Pfam" id="PF02882">
    <property type="entry name" value="THF_DHG_CYH_C"/>
    <property type="match status" value="1"/>
</dbReference>
<dbReference type="PRINTS" id="PR00085">
    <property type="entry name" value="THFDHDRGNASE"/>
</dbReference>
<dbReference type="SUPFAM" id="SSF53223">
    <property type="entry name" value="Aminoacid dehydrogenase-like, N-terminal domain"/>
    <property type="match status" value="1"/>
</dbReference>
<dbReference type="SUPFAM" id="SSF51735">
    <property type="entry name" value="NAD(P)-binding Rossmann-fold domains"/>
    <property type="match status" value="1"/>
</dbReference>
<organism>
    <name type="scientific">Haloarcula marismortui (strain ATCC 43049 / DSM 3752 / JCM 8966 / VKM B-1809)</name>
    <name type="common">Halobacterium marismortui</name>
    <dbReference type="NCBI Taxonomy" id="272569"/>
    <lineage>
        <taxon>Archaea</taxon>
        <taxon>Methanobacteriati</taxon>
        <taxon>Methanobacteriota</taxon>
        <taxon>Stenosarchaea group</taxon>
        <taxon>Halobacteria</taxon>
        <taxon>Halobacteriales</taxon>
        <taxon>Haloarculaceae</taxon>
        <taxon>Haloarcula</taxon>
    </lineage>
</organism>
<accession>Q5V3D9</accession>
<proteinExistence type="inferred from homology"/>